<reference key="1">
    <citation type="submission" date="1997-11" db="EMBL/GenBank/DDBJ databases">
        <title>Sequencing and characterisation of the region comprising xlyB, the second lytic enzyme of the defective prophage PBSX of Bacillus subtilis.</title>
        <authorList>
            <person name="da Silva E."/>
            <person name="Karamata D."/>
        </authorList>
    </citation>
    <scope>NUCLEOTIDE SEQUENCE [GENOMIC DNA]</scope>
    <source>
        <strain>168</strain>
    </source>
</reference>
<reference key="2">
    <citation type="journal article" date="1997" name="Nature">
        <title>The complete genome sequence of the Gram-positive bacterium Bacillus subtilis.</title>
        <authorList>
            <person name="Kunst F."/>
            <person name="Ogasawara N."/>
            <person name="Moszer I."/>
            <person name="Albertini A.M."/>
            <person name="Alloni G."/>
            <person name="Azevedo V."/>
            <person name="Bertero M.G."/>
            <person name="Bessieres P."/>
            <person name="Bolotin A."/>
            <person name="Borchert S."/>
            <person name="Borriss R."/>
            <person name="Boursier L."/>
            <person name="Brans A."/>
            <person name="Braun M."/>
            <person name="Brignell S.C."/>
            <person name="Bron S."/>
            <person name="Brouillet S."/>
            <person name="Bruschi C.V."/>
            <person name="Caldwell B."/>
            <person name="Capuano V."/>
            <person name="Carter N.M."/>
            <person name="Choi S.-K."/>
            <person name="Codani J.-J."/>
            <person name="Connerton I.F."/>
            <person name="Cummings N.J."/>
            <person name="Daniel R.A."/>
            <person name="Denizot F."/>
            <person name="Devine K.M."/>
            <person name="Duesterhoeft A."/>
            <person name="Ehrlich S.D."/>
            <person name="Emmerson P.T."/>
            <person name="Entian K.-D."/>
            <person name="Errington J."/>
            <person name="Fabret C."/>
            <person name="Ferrari E."/>
            <person name="Foulger D."/>
            <person name="Fritz C."/>
            <person name="Fujita M."/>
            <person name="Fujita Y."/>
            <person name="Fuma S."/>
            <person name="Galizzi A."/>
            <person name="Galleron N."/>
            <person name="Ghim S.-Y."/>
            <person name="Glaser P."/>
            <person name="Goffeau A."/>
            <person name="Golightly E.J."/>
            <person name="Grandi G."/>
            <person name="Guiseppi G."/>
            <person name="Guy B.J."/>
            <person name="Haga K."/>
            <person name="Haiech J."/>
            <person name="Harwood C.R."/>
            <person name="Henaut A."/>
            <person name="Hilbert H."/>
            <person name="Holsappel S."/>
            <person name="Hosono S."/>
            <person name="Hullo M.-F."/>
            <person name="Itaya M."/>
            <person name="Jones L.-M."/>
            <person name="Joris B."/>
            <person name="Karamata D."/>
            <person name="Kasahara Y."/>
            <person name="Klaerr-Blanchard M."/>
            <person name="Klein C."/>
            <person name="Kobayashi Y."/>
            <person name="Koetter P."/>
            <person name="Koningstein G."/>
            <person name="Krogh S."/>
            <person name="Kumano M."/>
            <person name="Kurita K."/>
            <person name="Lapidus A."/>
            <person name="Lardinois S."/>
            <person name="Lauber J."/>
            <person name="Lazarevic V."/>
            <person name="Lee S.-M."/>
            <person name="Levine A."/>
            <person name="Liu H."/>
            <person name="Masuda S."/>
            <person name="Mauel C."/>
            <person name="Medigue C."/>
            <person name="Medina N."/>
            <person name="Mellado R.P."/>
            <person name="Mizuno M."/>
            <person name="Moestl D."/>
            <person name="Nakai S."/>
            <person name="Noback M."/>
            <person name="Noone D."/>
            <person name="O'Reilly M."/>
            <person name="Ogawa K."/>
            <person name="Ogiwara A."/>
            <person name="Oudega B."/>
            <person name="Park S.-H."/>
            <person name="Parro V."/>
            <person name="Pohl T.M."/>
            <person name="Portetelle D."/>
            <person name="Porwollik S."/>
            <person name="Prescott A.M."/>
            <person name="Presecan E."/>
            <person name="Pujic P."/>
            <person name="Purnelle B."/>
            <person name="Rapoport G."/>
            <person name="Rey M."/>
            <person name="Reynolds S."/>
            <person name="Rieger M."/>
            <person name="Rivolta C."/>
            <person name="Rocha E."/>
            <person name="Roche B."/>
            <person name="Rose M."/>
            <person name="Sadaie Y."/>
            <person name="Sato T."/>
            <person name="Scanlan E."/>
            <person name="Schleich S."/>
            <person name="Schroeter R."/>
            <person name="Scoffone F."/>
            <person name="Sekiguchi J."/>
            <person name="Sekowska A."/>
            <person name="Seror S.J."/>
            <person name="Serror P."/>
            <person name="Shin B.-S."/>
            <person name="Soldo B."/>
            <person name="Sorokin A."/>
            <person name="Tacconi E."/>
            <person name="Takagi T."/>
            <person name="Takahashi H."/>
            <person name="Takemaru K."/>
            <person name="Takeuchi M."/>
            <person name="Tamakoshi A."/>
            <person name="Tanaka T."/>
            <person name="Terpstra P."/>
            <person name="Tognoni A."/>
            <person name="Tosato V."/>
            <person name="Uchiyama S."/>
            <person name="Vandenbol M."/>
            <person name="Vannier F."/>
            <person name="Vassarotti A."/>
            <person name="Viari A."/>
            <person name="Wambutt R."/>
            <person name="Wedler E."/>
            <person name="Wedler H."/>
            <person name="Weitzenegger T."/>
            <person name="Winters P."/>
            <person name="Wipat A."/>
            <person name="Yamamoto H."/>
            <person name="Yamane K."/>
            <person name="Yasumoto K."/>
            <person name="Yata K."/>
            <person name="Yoshida K."/>
            <person name="Yoshikawa H.-F."/>
            <person name="Zumstein E."/>
            <person name="Yoshikawa H."/>
            <person name="Danchin A."/>
        </authorList>
    </citation>
    <scope>NUCLEOTIDE SEQUENCE [LARGE SCALE GENOMIC DNA]</scope>
    <source>
        <strain>168</strain>
    </source>
</reference>
<reference key="3">
    <citation type="journal article" date="2009" name="Microbiology">
        <title>From a consortium sequence to a unified sequence: the Bacillus subtilis 168 reference genome a decade later.</title>
        <authorList>
            <person name="Barbe V."/>
            <person name="Cruveiller S."/>
            <person name="Kunst F."/>
            <person name="Lenoble P."/>
            <person name="Meurice G."/>
            <person name="Sekowska A."/>
            <person name="Vallenet D."/>
            <person name="Wang T."/>
            <person name="Moszer I."/>
            <person name="Medigue C."/>
            <person name="Danchin A."/>
        </authorList>
    </citation>
    <scope>SEQUENCE REVISION TO N-TERMINUS</scope>
</reference>
<accession>O34446</accession>
<accession>C0SPA2</accession>
<accession>Q7BUX3</accession>
<organism>
    <name type="scientific">Bacillus subtilis (strain 168)</name>
    <dbReference type="NCBI Taxonomy" id="224308"/>
    <lineage>
        <taxon>Bacteria</taxon>
        <taxon>Bacillati</taxon>
        <taxon>Bacillota</taxon>
        <taxon>Bacilli</taxon>
        <taxon>Bacillales</taxon>
        <taxon>Bacillaceae</taxon>
        <taxon>Bacillus</taxon>
    </lineage>
</organism>
<evidence type="ECO:0000305" key="1"/>
<protein>
    <recommendedName>
        <fullName>Uncharacterized protein YjpA</fullName>
    </recommendedName>
</protein>
<comment type="similarity">
    <text evidence="1">Belongs to the YciI family.</text>
</comment>
<comment type="sequence caution" evidence="1">
    <conflict type="frameshift">
        <sequence resource="EMBL-CDS" id="AAB87513"/>
    </conflict>
</comment>
<name>YJPA_BACSU</name>
<sequence length="85" mass="9642">MYTYLMLTMRTEKFNQEHVAGHYEFLDRLQAEKRLKMFGPFSDATGGAYVIEADSLEEAAEIGHADPLVASGSSELTIKEWKLKK</sequence>
<dbReference type="EMBL" id="AF034138">
    <property type="protein sequence ID" value="AAB87513.1"/>
    <property type="status" value="ALT_FRAME"/>
    <property type="molecule type" value="Genomic_DNA"/>
</dbReference>
<dbReference type="EMBL" id="AL009126">
    <property type="protein sequence ID" value="CAB13102.2"/>
    <property type="molecule type" value="Genomic_DNA"/>
</dbReference>
<dbReference type="PIR" id="H69853">
    <property type="entry name" value="H69853"/>
</dbReference>
<dbReference type="RefSeq" id="NP_389127.2">
    <property type="nucleotide sequence ID" value="NC_000964.3"/>
</dbReference>
<dbReference type="RefSeq" id="WP_003232731.1">
    <property type="nucleotide sequence ID" value="NZ_OZ025638.1"/>
</dbReference>
<dbReference type="SMR" id="O34446"/>
<dbReference type="FunCoup" id="O34446">
    <property type="interactions" value="3"/>
</dbReference>
<dbReference type="STRING" id="224308.BSU12450"/>
<dbReference type="PaxDb" id="224308-BSU12450"/>
<dbReference type="EnsemblBacteria" id="CAB13102">
    <property type="protein sequence ID" value="CAB13102"/>
    <property type="gene ID" value="BSU_12450"/>
</dbReference>
<dbReference type="GeneID" id="939831"/>
<dbReference type="KEGG" id="bsu:BSU12450"/>
<dbReference type="PATRIC" id="fig|224308.179.peg.1346"/>
<dbReference type="eggNOG" id="COG2350">
    <property type="taxonomic scope" value="Bacteria"/>
</dbReference>
<dbReference type="InParanoid" id="O34446"/>
<dbReference type="OrthoDB" id="162319at2"/>
<dbReference type="BioCyc" id="BSUB:BSU12450-MONOMER"/>
<dbReference type="Proteomes" id="UP000001570">
    <property type="component" value="Chromosome"/>
</dbReference>
<dbReference type="Gene3D" id="3.30.70.1060">
    <property type="entry name" value="Dimeric alpha+beta barrel"/>
    <property type="match status" value="1"/>
</dbReference>
<dbReference type="InterPro" id="IPR011008">
    <property type="entry name" value="Dimeric_a/b-barrel"/>
</dbReference>
<dbReference type="InterPro" id="IPR005545">
    <property type="entry name" value="YCII"/>
</dbReference>
<dbReference type="PANTHER" id="PTHR37828">
    <property type="entry name" value="GSR2449 PROTEIN"/>
    <property type="match status" value="1"/>
</dbReference>
<dbReference type="PANTHER" id="PTHR37828:SF1">
    <property type="entry name" value="YCII-RELATED DOMAIN-CONTAINING PROTEIN"/>
    <property type="match status" value="1"/>
</dbReference>
<dbReference type="Pfam" id="PF03795">
    <property type="entry name" value="YCII"/>
    <property type="match status" value="1"/>
</dbReference>
<dbReference type="SUPFAM" id="SSF54909">
    <property type="entry name" value="Dimeric alpha+beta barrel"/>
    <property type="match status" value="1"/>
</dbReference>
<keyword id="KW-1185">Reference proteome</keyword>
<feature type="chain" id="PRO_0000387958" description="Uncharacterized protein YjpA">
    <location>
        <begin position="1"/>
        <end position="85"/>
    </location>
</feature>
<proteinExistence type="inferred from homology"/>
<gene>
    <name type="primary">yjpA</name>
    <name type="ordered locus">BSU12450</name>
</gene>